<gene>
    <name evidence="1" type="primary">rpoC</name>
    <name type="ordered locus">CD630_00670</name>
</gene>
<protein>
    <recommendedName>
        <fullName evidence="1">DNA-directed RNA polymerase subunit beta'</fullName>
        <shortName evidence="1">RNAP subunit beta'</shortName>
        <ecNumber evidence="1">2.7.7.6</ecNumber>
    </recommendedName>
    <alternativeName>
        <fullName evidence="1">RNA polymerase subunit beta'</fullName>
    </alternativeName>
    <alternativeName>
        <fullName evidence="1">Transcriptase subunit beta'</fullName>
    </alternativeName>
</protein>
<reference key="1">
    <citation type="journal article" date="2006" name="Nat. Genet.">
        <title>The multidrug-resistant human pathogen Clostridium difficile has a highly mobile, mosaic genome.</title>
        <authorList>
            <person name="Sebaihia M."/>
            <person name="Wren B.W."/>
            <person name="Mullany P."/>
            <person name="Fairweather N.F."/>
            <person name="Minton N."/>
            <person name="Stabler R."/>
            <person name="Thomson N.R."/>
            <person name="Roberts A.P."/>
            <person name="Cerdeno-Tarraga A.M."/>
            <person name="Wang H."/>
            <person name="Holden M.T.G."/>
            <person name="Wright A."/>
            <person name="Churcher C."/>
            <person name="Quail M.A."/>
            <person name="Baker S."/>
            <person name="Bason N."/>
            <person name="Brooks K."/>
            <person name="Chillingworth T."/>
            <person name="Cronin A."/>
            <person name="Davis P."/>
            <person name="Dowd L."/>
            <person name="Fraser A."/>
            <person name="Feltwell T."/>
            <person name="Hance Z."/>
            <person name="Holroyd S."/>
            <person name="Jagels K."/>
            <person name="Moule S."/>
            <person name="Mungall K."/>
            <person name="Price C."/>
            <person name="Rabbinowitsch E."/>
            <person name="Sharp S."/>
            <person name="Simmonds M."/>
            <person name="Stevens K."/>
            <person name="Unwin L."/>
            <person name="Whithead S."/>
            <person name="Dupuy B."/>
            <person name="Dougan G."/>
            <person name="Barrell B."/>
            <person name="Parkhill J."/>
        </authorList>
    </citation>
    <scope>NUCLEOTIDE SEQUENCE [LARGE SCALE GENOMIC DNA]</scope>
    <source>
        <strain>630</strain>
    </source>
</reference>
<evidence type="ECO:0000255" key="1">
    <source>
        <dbReference type="HAMAP-Rule" id="MF_01322"/>
    </source>
</evidence>
<evidence type="ECO:0007829" key="2">
    <source>
        <dbReference type="PDB" id="7L7B"/>
    </source>
</evidence>
<name>RPOC_CLOD6</name>
<accession>Q18CF3</accession>
<dbReference type="EC" id="2.7.7.6" evidence="1"/>
<dbReference type="EMBL" id="AM180355">
    <property type="protein sequence ID" value="CAJ66882.1"/>
    <property type="molecule type" value="Genomic_DNA"/>
</dbReference>
<dbReference type="RefSeq" id="WP_003429485.1">
    <property type="nucleotide sequence ID" value="NZ_JAUPES010000049.1"/>
</dbReference>
<dbReference type="RefSeq" id="YP_001086531.1">
    <property type="nucleotide sequence ID" value="NC_009089.1"/>
</dbReference>
<dbReference type="PDB" id="7L7B">
    <property type="method" value="EM"/>
    <property type="resolution" value="3.26 A"/>
    <property type="chains" value="D=1-1161"/>
</dbReference>
<dbReference type="PDBsum" id="7L7B"/>
<dbReference type="EMDB" id="EMD-23210"/>
<dbReference type="SMR" id="Q18CF3"/>
<dbReference type="STRING" id="272563.CD630_00670"/>
<dbReference type="ChEMBL" id="CHEMBL2363852"/>
<dbReference type="DrugCentral" id="Q18CF3"/>
<dbReference type="EnsemblBacteria" id="CAJ66882">
    <property type="protein sequence ID" value="CAJ66882"/>
    <property type="gene ID" value="CD630_00670"/>
</dbReference>
<dbReference type="GeneID" id="66352565"/>
<dbReference type="KEGG" id="cdf:CD630_00670"/>
<dbReference type="KEGG" id="pdc:CDIF630_00133"/>
<dbReference type="PATRIC" id="fig|272563.120.peg.73"/>
<dbReference type="eggNOG" id="COG0086">
    <property type="taxonomic scope" value="Bacteria"/>
</dbReference>
<dbReference type="OrthoDB" id="9815296at2"/>
<dbReference type="PhylomeDB" id="Q18CF3"/>
<dbReference type="BioCyc" id="PDIF272563:G12WB-121-MONOMER"/>
<dbReference type="PRO" id="PR:Q18CF3"/>
<dbReference type="Proteomes" id="UP000001978">
    <property type="component" value="Chromosome"/>
</dbReference>
<dbReference type="GO" id="GO:0000428">
    <property type="term" value="C:DNA-directed RNA polymerase complex"/>
    <property type="evidence" value="ECO:0007669"/>
    <property type="project" value="UniProtKB-KW"/>
</dbReference>
<dbReference type="GO" id="GO:0003677">
    <property type="term" value="F:DNA binding"/>
    <property type="evidence" value="ECO:0007669"/>
    <property type="project" value="UniProtKB-UniRule"/>
</dbReference>
<dbReference type="GO" id="GO:0003899">
    <property type="term" value="F:DNA-directed RNA polymerase activity"/>
    <property type="evidence" value="ECO:0007669"/>
    <property type="project" value="UniProtKB-UniRule"/>
</dbReference>
<dbReference type="GO" id="GO:0000287">
    <property type="term" value="F:magnesium ion binding"/>
    <property type="evidence" value="ECO:0007669"/>
    <property type="project" value="UniProtKB-UniRule"/>
</dbReference>
<dbReference type="GO" id="GO:0008270">
    <property type="term" value="F:zinc ion binding"/>
    <property type="evidence" value="ECO:0007669"/>
    <property type="project" value="UniProtKB-UniRule"/>
</dbReference>
<dbReference type="GO" id="GO:0006351">
    <property type="term" value="P:DNA-templated transcription"/>
    <property type="evidence" value="ECO:0007669"/>
    <property type="project" value="UniProtKB-UniRule"/>
</dbReference>
<dbReference type="CDD" id="cd02655">
    <property type="entry name" value="RNAP_beta'_C"/>
    <property type="match status" value="1"/>
</dbReference>
<dbReference type="CDD" id="cd01609">
    <property type="entry name" value="RNAP_beta'_N"/>
    <property type="match status" value="1"/>
</dbReference>
<dbReference type="FunFam" id="1.10.150.390:FF:000002">
    <property type="entry name" value="DNA-directed RNA polymerase subunit beta"/>
    <property type="match status" value="1"/>
</dbReference>
<dbReference type="FunFam" id="4.10.860.120:FF:000001">
    <property type="entry name" value="DNA-directed RNA polymerase subunit beta"/>
    <property type="match status" value="1"/>
</dbReference>
<dbReference type="Gene3D" id="1.10.132.30">
    <property type="match status" value="1"/>
</dbReference>
<dbReference type="Gene3D" id="1.10.150.390">
    <property type="match status" value="1"/>
</dbReference>
<dbReference type="Gene3D" id="1.10.1790.20">
    <property type="match status" value="1"/>
</dbReference>
<dbReference type="Gene3D" id="1.10.40.90">
    <property type="match status" value="1"/>
</dbReference>
<dbReference type="Gene3D" id="2.40.40.20">
    <property type="match status" value="1"/>
</dbReference>
<dbReference type="Gene3D" id="2.40.50.100">
    <property type="match status" value="1"/>
</dbReference>
<dbReference type="Gene3D" id="4.10.860.120">
    <property type="entry name" value="RNA polymerase II, clamp domain"/>
    <property type="match status" value="1"/>
</dbReference>
<dbReference type="Gene3D" id="1.10.274.100">
    <property type="entry name" value="RNA polymerase Rpb1, domain 3"/>
    <property type="match status" value="2"/>
</dbReference>
<dbReference type="HAMAP" id="MF_01322">
    <property type="entry name" value="RNApol_bact_RpoC"/>
    <property type="match status" value="1"/>
</dbReference>
<dbReference type="InterPro" id="IPR045867">
    <property type="entry name" value="DNA-dir_RpoC_beta_prime"/>
</dbReference>
<dbReference type="InterPro" id="IPR012754">
    <property type="entry name" value="DNA-dir_RpoC_beta_prime_bact"/>
</dbReference>
<dbReference type="InterPro" id="IPR000722">
    <property type="entry name" value="RNA_pol_asu"/>
</dbReference>
<dbReference type="InterPro" id="IPR006592">
    <property type="entry name" value="RNA_pol_N"/>
</dbReference>
<dbReference type="InterPro" id="IPR007080">
    <property type="entry name" value="RNA_pol_Rpb1_1"/>
</dbReference>
<dbReference type="InterPro" id="IPR007066">
    <property type="entry name" value="RNA_pol_Rpb1_3"/>
</dbReference>
<dbReference type="InterPro" id="IPR042102">
    <property type="entry name" value="RNA_pol_Rpb1_3_sf"/>
</dbReference>
<dbReference type="InterPro" id="IPR007083">
    <property type="entry name" value="RNA_pol_Rpb1_4"/>
</dbReference>
<dbReference type="InterPro" id="IPR007081">
    <property type="entry name" value="RNA_pol_Rpb1_5"/>
</dbReference>
<dbReference type="InterPro" id="IPR044893">
    <property type="entry name" value="RNA_pol_Rpb1_clamp_domain"/>
</dbReference>
<dbReference type="InterPro" id="IPR038120">
    <property type="entry name" value="Rpb1_funnel_sf"/>
</dbReference>
<dbReference type="NCBIfam" id="TIGR02386">
    <property type="entry name" value="rpoC_TIGR"/>
    <property type="match status" value="1"/>
</dbReference>
<dbReference type="PANTHER" id="PTHR19376">
    <property type="entry name" value="DNA-DIRECTED RNA POLYMERASE"/>
    <property type="match status" value="1"/>
</dbReference>
<dbReference type="PANTHER" id="PTHR19376:SF54">
    <property type="entry name" value="DNA-DIRECTED RNA POLYMERASE SUBUNIT BETA"/>
    <property type="match status" value="1"/>
</dbReference>
<dbReference type="Pfam" id="PF04997">
    <property type="entry name" value="RNA_pol_Rpb1_1"/>
    <property type="match status" value="1"/>
</dbReference>
<dbReference type="Pfam" id="PF00623">
    <property type="entry name" value="RNA_pol_Rpb1_2"/>
    <property type="match status" value="1"/>
</dbReference>
<dbReference type="Pfam" id="PF04983">
    <property type="entry name" value="RNA_pol_Rpb1_3"/>
    <property type="match status" value="1"/>
</dbReference>
<dbReference type="Pfam" id="PF05000">
    <property type="entry name" value="RNA_pol_Rpb1_4"/>
    <property type="match status" value="1"/>
</dbReference>
<dbReference type="Pfam" id="PF04998">
    <property type="entry name" value="RNA_pol_Rpb1_5"/>
    <property type="match status" value="1"/>
</dbReference>
<dbReference type="SMART" id="SM00663">
    <property type="entry name" value="RPOLA_N"/>
    <property type="match status" value="1"/>
</dbReference>
<dbReference type="SUPFAM" id="SSF64484">
    <property type="entry name" value="beta and beta-prime subunits of DNA dependent RNA-polymerase"/>
    <property type="match status" value="1"/>
</dbReference>
<proteinExistence type="evidence at protein level"/>
<comment type="function">
    <text evidence="1">DNA-dependent RNA polymerase catalyzes the transcription of DNA into RNA using the four ribonucleoside triphosphates as substrates.</text>
</comment>
<comment type="catalytic activity">
    <reaction evidence="1">
        <text>RNA(n) + a ribonucleoside 5'-triphosphate = RNA(n+1) + diphosphate</text>
        <dbReference type="Rhea" id="RHEA:21248"/>
        <dbReference type="Rhea" id="RHEA-COMP:14527"/>
        <dbReference type="Rhea" id="RHEA-COMP:17342"/>
        <dbReference type="ChEBI" id="CHEBI:33019"/>
        <dbReference type="ChEBI" id="CHEBI:61557"/>
        <dbReference type="ChEBI" id="CHEBI:140395"/>
        <dbReference type="EC" id="2.7.7.6"/>
    </reaction>
</comment>
<comment type="cofactor">
    <cofactor evidence="1">
        <name>Mg(2+)</name>
        <dbReference type="ChEBI" id="CHEBI:18420"/>
    </cofactor>
    <text evidence="1">Binds 1 Mg(2+) ion per subunit.</text>
</comment>
<comment type="cofactor">
    <cofactor evidence="1">
        <name>Zn(2+)</name>
        <dbReference type="ChEBI" id="CHEBI:29105"/>
    </cofactor>
    <text evidence="1">Binds 2 Zn(2+) ions per subunit.</text>
</comment>
<comment type="subunit">
    <text evidence="1">The RNAP catalytic core consists of 2 alpha, 1 beta, 1 beta' and 1 omega subunit. When a sigma factor is associated with the core the holoenzyme is formed, which can initiate transcription.</text>
</comment>
<comment type="similarity">
    <text evidence="1">Belongs to the RNA polymerase beta' chain family.</text>
</comment>
<keyword id="KW-0002">3D-structure</keyword>
<keyword id="KW-0240">DNA-directed RNA polymerase</keyword>
<keyword id="KW-0460">Magnesium</keyword>
<keyword id="KW-0479">Metal-binding</keyword>
<keyword id="KW-0548">Nucleotidyltransferase</keyword>
<keyword id="KW-1185">Reference proteome</keyword>
<keyword id="KW-0804">Transcription</keyword>
<keyword id="KW-0808">Transferase</keyword>
<keyword id="KW-0862">Zinc</keyword>
<organism>
    <name type="scientific">Clostridioides difficile (strain 630)</name>
    <name type="common">Peptoclostridium difficile</name>
    <dbReference type="NCBI Taxonomy" id="272563"/>
    <lineage>
        <taxon>Bacteria</taxon>
        <taxon>Bacillati</taxon>
        <taxon>Bacillota</taxon>
        <taxon>Clostridia</taxon>
        <taxon>Peptostreptococcales</taxon>
        <taxon>Peptostreptococcaceae</taxon>
        <taxon>Clostridioides</taxon>
    </lineage>
</organism>
<sequence length="1161" mass="129729">MFELNNFESIKIALASPEKIRQWSRGEVKKPETINYRTLKPEKDGLFCERIFGPQKDWECHCGKYRRVRYKGVVCDRCGVEVTKSKVRRERMGHIELAAPMSHIWYFKGIPSRMGLLLDMSPRSLEKILYFASYVVVDPGETGLNEKQLLTEKEYRTALEKYGYTFTVGMGAEAVKTLLQNIDLEQQSKDLRAELKDSTGQKKVRTIRRLEVVEAFKKSGNKPEWMILDAIPVIPPDLRPMVQLDGGRFATSDLNDLYRRVINRNNRLKRLLELGAPDIIVRNEKRMLQEAVDALIDNGRRGRPVTGPGNRPLKSLSDMLKGKQGRFRQNLLGKRVDYSGRSVIVVGPELKFYQCGLPKKMALELFKPFVMDKLVKEGYAHNIKSAKSIVEKVKPEVWDVLEDVIKSHPVLLNRAPTLHRLGIQAFEPILVEGKAIKLHPLVCTAYNADFDGDQMAVHVPLSVEAQAEARFLMLSVNNILAPKDGSPITTPSQDMVLGCYYLTIEAQDGAKGTGMVFKDFNELLLAYYNKSVHLHALVKLKVTLEDGRSSLVESTVGRFIFNENIPQDLGFVDRKENPFALEVDFLADKKSLGKIIDKCFRKHGNTETAELLDYIKALGFKYSTLGGITVAVDDMSVPEEKKVFIAEAEAKVDKYEKAYRRGLISDEERYEKVIETWTETTDKVTDALMGGLDRLNNIYIMAHSGARGSKNQIRQLAGMRGLMANASGKTVEIPVKSNFREGLSVLEYFTSSHGARKGLADTAIRTAESGYLTRRLVDVSQDVIVREIDCGTEDTTEIYAIKEGNEVIEEIYDRIVGRYTIDPILNPETGEVIVEADSMIQEDEAETIVALGIEKIRIRTVLNCKTNHGVCSKCYGRNLATGKEVNIGEAVGIIAAQSIGEPGTQLTMRTFHTGGVAGADITQGLPRVEELFEARKPKGLAVITEVSGRVEIDETGKRKEVNVIPEEGETQTYVIPYGSRLKVKQGQMLEAGDPLTQGFINPHDIVRVNGVKGVQEYIVKEVQRVYRLQGVDVNDKHIEVIVRQMLSKVKVEDPGDTDLLPGGYEDVLTFNECNKDAIDKGLRPAVAKRVLLGITKASLATDSFLSAASFQETTRVLTEAAIKGKEDHLIGLKENVILGKLIPAGTGMKKYRNIAVEKIED</sequence>
<feature type="chain" id="PRO_0000353335" description="DNA-directed RNA polymerase subunit beta'">
    <location>
        <begin position="1"/>
        <end position="1161"/>
    </location>
</feature>
<feature type="binding site" evidence="1">
    <location>
        <position position="60"/>
    </location>
    <ligand>
        <name>Zn(2+)</name>
        <dbReference type="ChEBI" id="CHEBI:29105"/>
        <label>1</label>
    </ligand>
</feature>
<feature type="binding site" evidence="1">
    <location>
        <position position="62"/>
    </location>
    <ligand>
        <name>Zn(2+)</name>
        <dbReference type="ChEBI" id="CHEBI:29105"/>
        <label>1</label>
    </ligand>
</feature>
<feature type="binding site" evidence="1">
    <location>
        <position position="75"/>
    </location>
    <ligand>
        <name>Zn(2+)</name>
        <dbReference type="ChEBI" id="CHEBI:29105"/>
        <label>1</label>
    </ligand>
</feature>
<feature type="binding site" evidence="1">
    <location>
        <position position="78"/>
    </location>
    <ligand>
        <name>Zn(2+)</name>
        <dbReference type="ChEBI" id="CHEBI:29105"/>
        <label>1</label>
    </ligand>
</feature>
<feature type="binding site" evidence="1">
    <location>
        <position position="449"/>
    </location>
    <ligand>
        <name>Mg(2+)</name>
        <dbReference type="ChEBI" id="CHEBI:18420"/>
    </ligand>
</feature>
<feature type="binding site" evidence="1">
    <location>
        <position position="451"/>
    </location>
    <ligand>
        <name>Mg(2+)</name>
        <dbReference type="ChEBI" id="CHEBI:18420"/>
    </ligand>
</feature>
<feature type="binding site" evidence="1">
    <location>
        <position position="453"/>
    </location>
    <ligand>
        <name>Mg(2+)</name>
        <dbReference type="ChEBI" id="CHEBI:18420"/>
    </ligand>
</feature>
<feature type="binding site" evidence="1">
    <location>
        <position position="790"/>
    </location>
    <ligand>
        <name>Zn(2+)</name>
        <dbReference type="ChEBI" id="CHEBI:29105"/>
        <label>2</label>
    </ligand>
</feature>
<feature type="binding site" evidence="1">
    <location>
        <position position="864"/>
    </location>
    <ligand>
        <name>Zn(2+)</name>
        <dbReference type="ChEBI" id="CHEBI:29105"/>
        <label>2</label>
    </ligand>
</feature>
<feature type="binding site" evidence="1">
    <location>
        <position position="871"/>
    </location>
    <ligand>
        <name>Zn(2+)</name>
        <dbReference type="ChEBI" id="CHEBI:29105"/>
        <label>2</label>
    </ligand>
</feature>
<feature type="binding site" evidence="1">
    <location>
        <position position="874"/>
    </location>
    <ligand>
        <name>Zn(2+)</name>
        <dbReference type="ChEBI" id="CHEBI:29105"/>
        <label>2</label>
    </ligand>
</feature>
<feature type="strand" evidence="2">
    <location>
        <begin position="11"/>
        <end position="14"/>
    </location>
</feature>
<feature type="helix" evidence="2">
    <location>
        <begin position="17"/>
        <end position="23"/>
    </location>
</feature>
<feature type="turn" evidence="2">
    <location>
        <begin position="36"/>
        <end position="38"/>
    </location>
</feature>
<feature type="strand" evidence="2">
    <location>
        <begin position="43"/>
        <end position="45"/>
    </location>
</feature>
<feature type="strand" evidence="2">
    <location>
        <begin position="49"/>
        <end position="52"/>
    </location>
</feature>
<feature type="turn" evidence="2">
    <location>
        <begin position="76"/>
        <end position="78"/>
    </location>
</feature>
<feature type="helix" evidence="2">
    <location>
        <begin position="85"/>
        <end position="89"/>
    </location>
</feature>
<feature type="strand" evidence="2">
    <location>
        <begin position="93"/>
        <end position="102"/>
    </location>
</feature>
<feature type="helix" evidence="2">
    <location>
        <begin position="105"/>
        <end position="108"/>
    </location>
</feature>
<feature type="strand" evidence="2">
    <location>
        <begin position="109"/>
        <end position="111"/>
    </location>
</feature>
<feature type="helix" evidence="2">
    <location>
        <begin position="113"/>
        <end position="118"/>
    </location>
</feature>
<feature type="helix" evidence="2">
    <location>
        <begin position="122"/>
        <end position="129"/>
    </location>
</feature>
<feature type="helix" evidence="2">
    <location>
        <begin position="152"/>
        <end position="161"/>
    </location>
</feature>
<feature type="helix" evidence="2">
    <location>
        <begin position="172"/>
        <end position="181"/>
    </location>
</feature>
<feature type="helix" evidence="2">
    <location>
        <begin position="185"/>
        <end position="197"/>
    </location>
</feature>
<feature type="helix" evidence="2">
    <location>
        <begin position="201"/>
        <end position="218"/>
    </location>
</feature>
<feature type="helix" evidence="2">
    <location>
        <begin position="223"/>
        <end position="226"/>
    </location>
</feature>
<feature type="strand" evidence="2">
    <location>
        <begin position="227"/>
        <end position="233"/>
    </location>
</feature>
<feature type="helix" evidence="2">
    <location>
        <begin position="236"/>
        <end position="238"/>
    </location>
</feature>
<feature type="strand" evidence="2">
    <location>
        <begin position="241"/>
        <end position="244"/>
    </location>
</feature>
<feature type="turn" evidence="2">
    <location>
        <begin position="245"/>
        <end position="247"/>
    </location>
</feature>
<feature type="strand" evidence="2">
    <location>
        <begin position="248"/>
        <end position="251"/>
    </location>
</feature>
<feature type="helix" evidence="2">
    <location>
        <begin position="253"/>
        <end position="274"/>
    </location>
</feature>
<feature type="helix" evidence="2">
    <location>
        <begin position="278"/>
        <end position="296"/>
    </location>
</feature>
<feature type="strand" evidence="2">
    <location>
        <begin position="300"/>
        <end position="303"/>
    </location>
</feature>
<feature type="helix" evidence="2">
    <location>
        <begin position="316"/>
        <end position="319"/>
    </location>
</feature>
<feature type="turn" evidence="2">
    <location>
        <begin position="327"/>
        <end position="332"/>
    </location>
</feature>
<feature type="strand" evidence="2">
    <location>
        <begin position="340"/>
        <end position="346"/>
    </location>
</feature>
<feature type="strand" evidence="2">
    <location>
        <begin position="354"/>
        <end position="358"/>
    </location>
</feature>
<feature type="helix" evidence="2">
    <location>
        <begin position="359"/>
        <end position="365"/>
    </location>
</feature>
<feature type="helix" evidence="2">
    <location>
        <begin position="367"/>
        <end position="376"/>
    </location>
</feature>
<feature type="helix" evidence="2">
    <location>
        <begin position="383"/>
        <end position="391"/>
    </location>
</feature>
<feature type="helix" evidence="2">
    <location>
        <begin position="397"/>
        <end position="405"/>
    </location>
</feature>
<feature type="strand" evidence="2">
    <location>
        <begin position="410"/>
        <end position="413"/>
    </location>
</feature>
<feature type="helix" evidence="2">
    <location>
        <begin position="420"/>
        <end position="422"/>
    </location>
</feature>
<feature type="strand" evidence="2">
    <location>
        <begin position="423"/>
        <end position="438"/>
    </location>
</feature>
<feature type="helix" evidence="2">
    <location>
        <begin position="443"/>
        <end position="446"/>
    </location>
</feature>
<feature type="strand" evidence="2">
    <location>
        <begin position="450"/>
        <end position="452"/>
    </location>
</feature>
<feature type="strand" evidence="2">
    <location>
        <begin position="454"/>
        <end position="457"/>
    </location>
</feature>
<feature type="helix" evidence="2">
    <location>
        <begin position="463"/>
        <end position="472"/>
    </location>
</feature>
<feature type="helix" evidence="2">
    <location>
        <begin position="475"/>
        <end position="477"/>
    </location>
</feature>
<feature type="turn" evidence="2">
    <location>
        <begin position="482"/>
        <end position="484"/>
    </location>
</feature>
<feature type="strand" evidence="2">
    <location>
        <begin position="485"/>
        <end position="489"/>
    </location>
</feature>
<feature type="helix" evidence="2">
    <location>
        <begin position="493"/>
        <end position="501"/>
    </location>
</feature>
<feature type="helix" evidence="2">
    <location>
        <begin position="520"/>
        <end position="528"/>
    </location>
</feature>
<feature type="strand" evidence="2">
    <location>
        <begin position="537"/>
        <end position="543"/>
    </location>
</feature>
<feature type="strand" evidence="2">
    <location>
        <begin position="549"/>
        <end position="555"/>
    </location>
</feature>
<feature type="helix" evidence="2">
    <location>
        <begin position="556"/>
        <end position="561"/>
    </location>
</feature>
<feature type="strand" evidence="2">
    <location>
        <begin position="563"/>
        <end position="565"/>
    </location>
</feature>
<feature type="strand" evidence="2">
    <location>
        <begin position="569"/>
        <end position="572"/>
    </location>
</feature>
<feature type="turn" evidence="2">
    <location>
        <begin position="574"/>
        <end position="576"/>
    </location>
</feature>
<feature type="helix" evidence="2">
    <location>
        <begin position="589"/>
        <end position="602"/>
    </location>
</feature>
<feature type="turn" evidence="2">
    <location>
        <begin position="607"/>
        <end position="609"/>
    </location>
</feature>
<feature type="helix" evidence="2">
    <location>
        <begin position="612"/>
        <end position="626"/>
    </location>
</feature>
<feature type="turn" evidence="2">
    <location>
        <begin position="632"/>
        <end position="634"/>
    </location>
</feature>
<feature type="strand" evidence="2">
    <location>
        <begin position="639"/>
        <end position="641"/>
    </location>
</feature>
<feature type="helix" evidence="2">
    <location>
        <begin position="642"/>
        <end position="660"/>
    </location>
</feature>
<feature type="helix" evidence="2">
    <location>
        <begin position="666"/>
        <end position="690"/>
    </location>
</feature>
<feature type="helix" evidence="2">
    <location>
        <begin position="697"/>
        <end position="703"/>
    </location>
</feature>
<feature type="strand" evidence="2">
    <location>
        <begin position="704"/>
        <end position="707"/>
    </location>
</feature>
<feature type="helix" evidence="2">
    <location>
        <begin position="710"/>
        <end position="716"/>
    </location>
</feature>
<feature type="turn" evidence="2">
    <location>
        <begin position="739"/>
        <end position="741"/>
    </location>
</feature>
<feature type="helix" evidence="2">
    <location>
        <begin position="745"/>
        <end position="779"/>
    </location>
</feature>
<feature type="strand" evidence="2">
    <location>
        <begin position="796"/>
        <end position="798"/>
    </location>
</feature>
<feature type="strand" evidence="2">
    <location>
        <begin position="803"/>
        <end position="805"/>
    </location>
</feature>
<feature type="turn" evidence="2">
    <location>
        <begin position="811"/>
        <end position="817"/>
    </location>
</feature>
<feature type="turn" evidence="2">
    <location>
        <begin position="827"/>
        <end position="829"/>
    </location>
</feature>
<feature type="strand" evidence="2">
    <location>
        <begin position="832"/>
        <end position="834"/>
    </location>
</feature>
<feature type="helix" evidence="2">
    <location>
        <begin position="842"/>
        <end position="850"/>
    </location>
</feature>
<feature type="strand" evidence="2">
    <location>
        <begin position="856"/>
        <end position="858"/>
    </location>
</feature>
<feature type="helix" evidence="2">
    <location>
        <begin position="861"/>
        <end position="863"/>
    </location>
</feature>
<feature type="strand" evidence="2">
    <location>
        <begin position="867"/>
        <end position="869"/>
    </location>
</feature>
<feature type="helix" evidence="2">
    <location>
        <begin position="872"/>
        <end position="875"/>
    </location>
</feature>
<feature type="turn" evidence="2">
    <location>
        <begin position="879"/>
        <end position="881"/>
    </location>
</feature>
<feature type="strand" evidence="2">
    <location>
        <begin position="882"/>
        <end position="884"/>
    </location>
</feature>
<feature type="helix" evidence="2">
    <location>
        <begin position="891"/>
        <end position="900"/>
    </location>
</feature>
<feature type="helix" evidence="2">
    <location>
        <begin position="903"/>
        <end position="906"/>
    </location>
</feature>
<feature type="helix" evidence="2">
    <location>
        <begin position="925"/>
        <end position="932"/>
    </location>
</feature>
<feature type="strand" evidence="2">
    <location>
        <begin position="938"/>
        <end position="940"/>
    </location>
</feature>
<feature type="strand" evidence="2">
    <location>
        <begin position="948"/>
        <end position="951"/>
    </location>
</feature>
<feature type="strand" evidence="2">
    <location>
        <begin position="960"/>
        <end position="964"/>
    </location>
</feature>
<feature type="strand" evidence="2">
    <location>
        <begin position="966"/>
        <end position="969"/>
    </location>
</feature>
<feature type="strand" evidence="2">
    <location>
        <begin position="971"/>
        <end position="974"/>
    </location>
</feature>
<feature type="strand" evidence="2">
    <location>
        <begin position="994"/>
        <end position="999"/>
    </location>
</feature>
<feature type="helix" evidence="2">
    <location>
        <begin position="1004"/>
        <end position="1008"/>
    </location>
</feature>
<feature type="helix" evidence="2">
    <location>
        <begin position="1011"/>
        <end position="1027"/>
    </location>
</feature>
<feature type="helix" evidence="2">
    <location>
        <begin position="1035"/>
        <end position="1045"/>
    </location>
</feature>
<feature type="turn" evidence="2">
    <location>
        <begin position="1055"/>
        <end position="1058"/>
    </location>
</feature>
<feature type="helix" evidence="2">
    <location>
        <begin position="1067"/>
        <end position="1075"/>
    </location>
</feature>
<feature type="helix" evidence="2">
    <location>
        <begin position="1076"/>
        <end position="1078"/>
    </location>
</feature>
<feature type="strand" evidence="2">
    <location>
        <begin position="1080"/>
        <end position="1082"/>
    </location>
</feature>
<feature type="helix" evidence="2">
    <location>
        <begin position="1094"/>
        <end position="1097"/>
    </location>
</feature>
<feature type="helix" evidence="2">
    <location>
        <begin position="1104"/>
        <end position="1107"/>
    </location>
</feature>
<feature type="helix" evidence="2">
    <location>
        <begin position="1113"/>
        <end position="1121"/>
    </location>
</feature>
<feature type="turn" evidence="2">
    <location>
        <begin position="1122"/>
        <end position="1124"/>
    </location>
</feature>
<feature type="helix" evidence="2">
    <location>
        <begin position="1134"/>
        <end position="1138"/>
    </location>
</feature>
<feature type="helix" evidence="2">
    <location>
        <begin position="1145"/>
        <end position="1147"/>
    </location>
</feature>
<feature type="helix" evidence="2">
    <location>
        <begin position="1149"/>
        <end position="1152"/>
    </location>
</feature>